<proteinExistence type="evidence at transcript level"/>
<keyword id="KW-0924">Ammonia transport</keyword>
<keyword id="KW-0472">Membrane</keyword>
<keyword id="KW-1185">Reference proteome</keyword>
<keyword id="KW-0812">Transmembrane</keyword>
<keyword id="KW-1133">Transmembrane helix</keyword>
<keyword id="KW-0813">Transport</keyword>
<gene>
    <name type="primary">AMT2-2</name>
    <name type="ordered locus">Os01g0831900</name>
    <name type="ordered locus">LOC_Os01g61550</name>
    <name type="ORF">OsJ_03963</name>
    <name type="ORF">P0446G04.40</name>
</gene>
<comment type="function">
    <text evidence="1">Involved in ammonium transport.</text>
</comment>
<comment type="subcellular location">
    <subcellularLocation>
        <location evidence="3">Membrane</location>
        <topology evidence="3">Multi-pass membrane protein</topology>
    </subcellularLocation>
</comment>
<comment type="similarity">
    <text evidence="3">Belongs to the ammonia transporter channel (TC 1.A.11.2) family.</text>
</comment>
<comment type="sequence caution" evidence="3">
    <conflict type="erroneous initiation">
        <sequence resource="EMBL-CDS" id="BAB89598"/>
    </conflict>
</comment>
<comment type="sequence caution" evidence="3">
    <conflict type="erroneous initiation">
        <sequence resource="EMBL-CDS" id="EAZ14038"/>
    </conflict>
</comment>
<feature type="chain" id="PRO_0000385648" description="Ammonium transporter 2 member 2">
    <location>
        <begin position="1"/>
        <end position="501"/>
    </location>
</feature>
<feature type="transmembrane region" description="Helical" evidence="2">
    <location>
        <begin position="35"/>
        <end position="55"/>
    </location>
</feature>
<feature type="transmembrane region" description="Helical" evidence="2">
    <location>
        <begin position="64"/>
        <end position="84"/>
    </location>
</feature>
<feature type="transmembrane region" description="Helical" evidence="2">
    <location>
        <begin position="140"/>
        <end position="160"/>
    </location>
</feature>
<feature type="transmembrane region" description="Helical" evidence="2">
    <location>
        <begin position="174"/>
        <end position="194"/>
    </location>
</feature>
<feature type="transmembrane region" description="Helical" evidence="2">
    <location>
        <begin position="203"/>
        <end position="223"/>
    </location>
</feature>
<feature type="transmembrane region" description="Helical" evidence="2">
    <location>
        <begin position="238"/>
        <end position="258"/>
    </location>
</feature>
<feature type="transmembrane region" description="Helical" evidence="2">
    <location>
        <begin position="274"/>
        <end position="294"/>
    </location>
</feature>
<feature type="transmembrane region" description="Helical" evidence="2">
    <location>
        <begin position="298"/>
        <end position="318"/>
    </location>
</feature>
<feature type="transmembrane region" description="Helical" evidence="2">
    <location>
        <begin position="322"/>
        <end position="342"/>
    </location>
</feature>
<feature type="transmembrane region" description="Helical" evidence="2">
    <location>
        <begin position="356"/>
        <end position="376"/>
    </location>
</feature>
<feature type="transmembrane region" description="Helical" evidence="2">
    <location>
        <begin position="412"/>
        <end position="432"/>
    </location>
</feature>
<feature type="sequence conflict" description="In Ref. 6; AK102106." evidence="3" ref="6">
    <location>
        <position position="279"/>
    </location>
</feature>
<sequence length="501" mass="53740">MHLRMASPPQPGPYMPDLPAVPAWLNKGDTAWQLVAATFVGIQSMPGLVVIYGSIVKKKWAVNSAFMALYAYASTLIVWVLVGFRMAFGDRLLPFWAKAGPALTQDFLVQRAVFPATAHYGSDGTLETPRTEPFYAEAALVLFEFEFAAITLVLLAGSLLGRMNIKAWMAFTPLWLLFSYTVGAFSLWGGGFLYQWGVIDYSGGYVIHLSSGVAGFTAAYWVGPRLKSDRERFSPNNILLMIAGGGLLWLGWAGFNGGAPYAPNVTATVAVLNTNVSAATSLLTWTCLDVIFFGKPSVIGAVQGMMTGLVCITPGAGLVHTWSAMLMGMFAGSVPWFTMMILHKKSTFLMKVDDTLAVFHTHAVAGILGGVLTGLLATPELCALDCPIPNMRGVFYGSGIGQLGKQLGGALFVTVWNLIVTSAILLCIGLFIPLRMSDDQLMIGDDAAHGEEAYALWGDGEKFDVTRPETTRTGGAGGAGREDTMEQRLTNMGARGVTIQL</sequence>
<evidence type="ECO:0000250" key="1"/>
<evidence type="ECO:0000255" key="2"/>
<evidence type="ECO:0000305" key="3"/>
<organism>
    <name type="scientific">Oryza sativa subsp. japonica</name>
    <name type="common">Rice</name>
    <dbReference type="NCBI Taxonomy" id="39947"/>
    <lineage>
        <taxon>Eukaryota</taxon>
        <taxon>Viridiplantae</taxon>
        <taxon>Streptophyta</taxon>
        <taxon>Embryophyta</taxon>
        <taxon>Tracheophyta</taxon>
        <taxon>Spermatophyta</taxon>
        <taxon>Magnoliopsida</taxon>
        <taxon>Liliopsida</taxon>
        <taxon>Poales</taxon>
        <taxon>Poaceae</taxon>
        <taxon>BOP clade</taxon>
        <taxon>Oryzoideae</taxon>
        <taxon>Oryzeae</taxon>
        <taxon>Oryzinae</taxon>
        <taxon>Oryza</taxon>
        <taxon>Oryza sativa</taxon>
    </lineage>
</organism>
<dbReference type="EMBL" id="AP003252">
    <property type="protein sequence ID" value="BAB89598.1"/>
    <property type="status" value="ALT_INIT"/>
    <property type="molecule type" value="Genomic_DNA"/>
</dbReference>
<dbReference type="EMBL" id="AP008207">
    <property type="protein sequence ID" value="BAF06616.1"/>
    <property type="molecule type" value="Genomic_DNA"/>
</dbReference>
<dbReference type="EMBL" id="AP014957">
    <property type="protein sequence ID" value="BAS75060.1"/>
    <property type="molecule type" value="Genomic_DNA"/>
</dbReference>
<dbReference type="EMBL" id="CM000138">
    <property type="protein sequence ID" value="EAZ14038.1"/>
    <property type="status" value="ALT_INIT"/>
    <property type="molecule type" value="Genomic_DNA"/>
</dbReference>
<dbReference type="EMBL" id="AK102106">
    <property type="status" value="NOT_ANNOTATED_CDS"/>
    <property type="molecule type" value="mRNA"/>
</dbReference>
<dbReference type="RefSeq" id="XP_015643018.1">
    <property type="nucleotide sequence ID" value="XM_015787532.1"/>
</dbReference>
<dbReference type="SMR" id="Q8S230"/>
<dbReference type="FunCoup" id="Q8S230">
    <property type="interactions" value="529"/>
</dbReference>
<dbReference type="STRING" id="39947.Q8S230"/>
<dbReference type="PaxDb" id="39947-Q8S230"/>
<dbReference type="EnsemblPlants" id="Os01t0831900-01">
    <property type="protein sequence ID" value="Os01t0831900-01"/>
    <property type="gene ID" value="Os01g0831900"/>
</dbReference>
<dbReference type="Gramene" id="Os01t0831900-01">
    <property type="protein sequence ID" value="Os01t0831900-01"/>
    <property type="gene ID" value="Os01g0831900"/>
</dbReference>
<dbReference type="KEGG" id="dosa:Os01g0831900"/>
<dbReference type="eggNOG" id="KOG0682">
    <property type="taxonomic scope" value="Eukaryota"/>
</dbReference>
<dbReference type="InParanoid" id="Q8S230"/>
<dbReference type="OMA" id="IRIFMPL"/>
<dbReference type="OrthoDB" id="534912at2759"/>
<dbReference type="Proteomes" id="UP000000763">
    <property type="component" value="Chromosome 1"/>
</dbReference>
<dbReference type="Proteomes" id="UP000007752">
    <property type="component" value="Chromosome 1"/>
</dbReference>
<dbReference type="Proteomes" id="UP000059680">
    <property type="component" value="Chromosome 1"/>
</dbReference>
<dbReference type="ExpressionAtlas" id="Q8S230">
    <property type="expression patterns" value="differential"/>
</dbReference>
<dbReference type="GO" id="GO:0005886">
    <property type="term" value="C:plasma membrane"/>
    <property type="evidence" value="ECO:0000318"/>
    <property type="project" value="GO_Central"/>
</dbReference>
<dbReference type="GO" id="GO:0008519">
    <property type="term" value="F:ammonium channel activity"/>
    <property type="evidence" value="ECO:0000318"/>
    <property type="project" value="GO_Central"/>
</dbReference>
<dbReference type="GO" id="GO:0072488">
    <property type="term" value="P:ammonium transmembrane transport"/>
    <property type="evidence" value="ECO:0000318"/>
    <property type="project" value="GO_Central"/>
</dbReference>
<dbReference type="FunFam" id="1.10.3430.10:FF:000005">
    <property type="entry name" value="Ammonium transporter"/>
    <property type="match status" value="1"/>
</dbReference>
<dbReference type="Gene3D" id="1.10.3430.10">
    <property type="entry name" value="Ammonium transporter AmtB like domains"/>
    <property type="match status" value="1"/>
</dbReference>
<dbReference type="InterPro" id="IPR029020">
    <property type="entry name" value="Ammonium/urea_transptr"/>
</dbReference>
<dbReference type="InterPro" id="IPR001905">
    <property type="entry name" value="Ammonium_transpt"/>
</dbReference>
<dbReference type="InterPro" id="IPR018047">
    <property type="entry name" value="Ammonium_transpt_CS"/>
</dbReference>
<dbReference type="InterPro" id="IPR024041">
    <property type="entry name" value="NH4_transpt_AmtB-like_dom"/>
</dbReference>
<dbReference type="InterPro" id="IPR002229">
    <property type="entry name" value="RhesusRHD"/>
</dbReference>
<dbReference type="NCBIfam" id="TIGR00836">
    <property type="entry name" value="amt"/>
    <property type="match status" value="1"/>
</dbReference>
<dbReference type="PANTHER" id="PTHR43029:SF38">
    <property type="entry name" value="AMMONIUM TRANSPORTER 2"/>
    <property type="match status" value="1"/>
</dbReference>
<dbReference type="PANTHER" id="PTHR43029">
    <property type="entry name" value="AMMONIUM TRANSPORTER MEP2"/>
    <property type="match status" value="1"/>
</dbReference>
<dbReference type="Pfam" id="PF00909">
    <property type="entry name" value="Ammonium_transp"/>
    <property type="match status" value="1"/>
</dbReference>
<dbReference type="PRINTS" id="PR00342">
    <property type="entry name" value="RHESUSRHD"/>
</dbReference>
<dbReference type="SUPFAM" id="SSF111352">
    <property type="entry name" value="Ammonium transporter"/>
    <property type="match status" value="1"/>
</dbReference>
<dbReference type="PROSITE" id="PS01219">
    <property type="entry name" value="AMMONIUM_TRANSP"/>
    <property type="match status" value="1"/>
</dbReference>
<reference key="1">
    <citation type="journal article" date="2002" name="Nature">
        <title>The genome sequence and structure of rice chromosome 1.</title>
        <authorList>
            <person name="Sasaki T."/>
            <person name="Matsumoto T."/>
            <person name="Yamamoto K."/>
            <person name="Sakata K."/>
            <person name="Baba T."/>
            <person name="Katayose Y."/>
            <person name="Wu J."/>
            <person name="Niimura Y."/>
            <person name="Cheng Z."/>
            <person name="Nagamura Y."/>
            <person name="Antonio B.A."/>
            <person name="Kanamori H."/>
            <person name="Hosokawa S."/>
            <person name="Masukawa M."/>
            <person name="Arikawa K."/>
            <person name="Chiden Y."/>
            <person name="Hayashi M."/>
            <person name="Okamoto M."/>
            <person name="Ando T."/>
            <person name="Aoki H."/>
            <person name="Arita K."/>
            <person name="Hamada M."/>
            <person name="Harada C."/>
            <person name="Hijishita S."/>
            <person name="Honda M."/>
            <person name="Ichikawa Y."/>
            <person name="Idonuma A."/>
            <person name="Iijima M."/>
            <person name="Ikeda M."/>
            <person name="Ikeno M."/>
            <person name="Ito S."/>
            <person name="Ito T."/>
            <person name="Ito Y."/>
            <person name="Ito Y."/>
            <person name="Iwabuchi A."/>
            <person name="Kamiya K."/>
            <person name="Karasawa W."/>
            <person name="Katagiri S."/>
            <person name="Kikuta A."/>
            <person name="Kobayashi N."/>
            <person name="Kono I."/>
            <person name="Machita K."/>
            <person name="Maehara T."/>
            <person name="Mizuno H."/>
            <person name="Mizubayashi T."/>
            <person name="Mukai Y."/>
            <person name="Nagasaki H."/>
            <person name="Nakashima M."/>
            <person name="Nakama Y."/>
            <person name="Nakamichi Y."/>
            <person name="Nakamura M."/>
            <person name="Namiki N."/>
            <person name="Negishi M."/>
            <person name="Ohta I."/>
            <person name="Ono N."/>
            <person name="Saji S."/>
            <person name="Sakai K."/>
            <person name="Shibata M."/>
            <person name="Shimokawa T."/>
            <person name="Shomura A."/>
            <person name="Song J."/>
            <person name="Takazaki Y."/>
            <person name="Terasawa K."/>
            <person name="Tsuji K."/>
            <person name="Waki K."/>
            <person name="Yamagata H."/>
            <person name="Yamane H."/>
            <person name="Yoshiki S."/>
            <person name="Yoshihara R."/>
            <person name="Yukawa K."/>
            <person name="Zhong H."/>
            <person name="Iwama H."/>
            <person name="Endo T."/>
            <person name="Ito H."/>
            <person name="Hahn J.H."/>
            <person name="Kim H.-I."/>
            <person name="Eun M.-Y."/>
            <person name="Yano M."/>
            <person name="Jiang J."/>
            <person name="Gojobori T."/>
        </authorList>
    </citation>
    <scope>NUCLEOTIDE SEQUENCE [LARGE SCALE GENOMIC DNA]</scope>
    <source>
        <strain>cv. Nipponbare</strain>
    </source>
</reference>
<reference key="2">
    <citation type="journal article" date="2005" name="Nature">
        <title>The map-based sequence of the rice genome.</title>
        <authorList>
            <consortium name="International rice genome sequencing project (IRGSP)"/>
        </authorList>
    </citation>
    <scope>NUCLEOTIDE SEQUENCE [LARGE SCALE GENOMIC DNA]</scope>
    <source>
        <strain>cv. Nipponbare</strain>
    </source>
</reference>
<reference key="3">
    <citation type="journal article" date="2008" name="Nucleic Acids Res.">
        <title>The rice annotation project database (RAP-DB): 2008 update.</title>
        <authorList>
            <consortium name="The rice annotation project (RAP)"/>
        </authorList>
    </citation>
    <scope>GENOME REANNOTATION</scope>
    <source>
        <strain>cv. Nipponbare</strain>
    </source>
</reference>
<reference key="4">
    <citation type="journal article" date="2013" name="Rice">
        <title>Improvement of the Oryza sativa Nipponbare reference genome using next generation sequence and optical map data.</title>
        <authorList>
            <person name="Kawahara Y."/>
            <person name="de la Bastide M."/>
            <person name="Hamilton J.P."/>
            <person name="Kanamori H."/>
            <person name="McCombie W.R."/>
            <person name="Ouyang S."/>
            <person name="Schwartz D.C."/>
            <person name="Tanaka T."/>
            <person name="Wu J."/>
            <person name="Zhou S."/>
            <person name="Childs K.L."/>
            <person name="Davidson R.M."/>
            <person name="Lin H."/>
            <person name="Quesada-Ocampo L."/>
            <person name="Vaillancourt B."/>
            <person name="Sakai H."/>
            <person name="Lee S.S."/>
            <person name="Kim J."/>
            <person name="Numa H."/>
            <person name="Itoh T."/>
            <person name="Buell C.R."/>
            <person name="Matsumoto T."/>
        </authorList>
    </citation>
    <scope>GENOME REANNOTATION</scope>
    <source>
        <strain>cv. Nipponbare</strain>
    </source>
</reference>
<reference key="5">
    <citation type="journal article" date="2005" name="PLoS Biol.">
        <title>The genomes of Oryza sativa: a history of duplications.</title>
        <authorList>
            <person name="Yu J."/>
            <person name="Wang J."/>
            <person name="Lin W."/>
            <person name="Li S."/>
            <person name="Li H."/>
            <person name="Zhou J."/>
            <person name="Ni P."/>
            <person name="Dong W."/>
            <person name="Hu S."/>
            <person name="Zeng C."/>
            <person name="Zhang J."/>
            <person name="Zhang Y."/>
            <person name="Li R."/>
            <person name="Xu Z."/>
            <person name="Li S."/>
            <person name="Li X."/>
            <person name="Zheng H."/>
            <person name="Cong L."/>
            <person name="Lin L."/>
            <person name="Yin J."/>
            <person name="Geng J."/>
            <person name="Li G."/>
            <person name="Shi J."/>
            <person name="Liu J."/>
            <person name="Lv H."/>
            <person name="Li J."/>
            <person name="Wang J."/>
            <person name="Deng Y."/>
            <person name="Ran L."/>
            <person name="Shi X."/>
            <person name="Wang X."/>
            <person name="Wu Q."/>
            <person name="Li C."/>
            <person name="Ren X."/>
            <person name="Wang J."/>
            <person name="Wang X."/>
            <person name="Li D."/>
            <person name="Liu D."/>
            <person name="Zhang X."/>
            <person name="Ji Z."/>
            <person name="Zhao W."/>
            <person name="Sun Y."/>
            <person name="Zhang Z."/>
            <person name="Bao J."/>
            <person name="Han Y."/>
            <person name="Dong L."/>
            <person name="Ji J."/>
            <person name="Chen P."/>
            <person name="Wu S."/>
            <person name="Liu J."/>
            <person name="Xiao Y."/>
            <person name="Bu D."/>
            <person name="Tan J."/>
            <person name="Yang L."/>
            <person name="Ye C."/>
            <person name="Zhang J."/>
            <person name="Xu J."/>
            <person name="Zhou Y."/>
            <person name="Yu Y."/>
            <person name="Zhang B."/>
            <person name="Zhuang S."/>
            <person name="Wei H."/>
            <person name="Liu B."/>
            <person name="Lei M."/>
            <person name="Yu H."/>
            <person name="Li Y."/>
            <person name="Xu H."/>
            <person name="Wei S."/>
            <person name="He X."/>
            <person name="Fang L."/>
            <person name="Zhang Z."/>
            <person name="Zhang Y."/>
            <person name="Huang X."/>
            <person name="Su Z."/>
            <person name="Tong W."/>
            <person name="Li J."/>
            <person name="Tong Z."/>
            <person name="Li S."/>
            <person name="Ye J."/>
            <person name="Wang L."/>
            <person name="Fang L."/>
            <person name="Lei T."/>
            <person name="Chen C.-S."/>
            <person name="Chen H.-C."/>
            <person name="Xu Z."/>
            <person name="Li H."/>
            <person name="Huang H."/>
            <person name="Zhang F."/>
            <person name="Xu H."/>
            <person name="Li N."/>
            <person name="Zhao C."/>
            <person name="Li S."/>
            <person name="Dong L."/>
            <person name="Huang Y."/>
            <person name="Li L."/>
            <person name="Xi Y."/>
            <person name="Qi Q."/>
            <person name="Li W."/>
            <person name="Zhang B."/>
            <person name="Hu W."/>
            <person name="Zhang Y."/>
            <person name="Tian X."/>
            <person name="Jiao Y."/>
            <person name="Liang X."/>
            <person name="Jin J."/>
            <person name="Gao L."/>
            <person name="Zheng W."/>
            <person name="Hao B."/>
            <person name="Liu S.-M."/>
            <person name="Wang W."/>
            <person name="Yuan L."/>
            <person name="Cao M."/>
            <person name="McDermott J."/>
            <person name="Samudrala R."/>
            <person name="Wang J."/>
            <person name="Wong G.K.-S."/>
            <person name="Yang H."/>
        </authorList>
    </citation>
    <scope>NUCLEOTIDE SEQUENCE [LARGE SCALE GENOMIC DNA]</scope>
    <source>
        <strain>cv. Nipponbare</strain>
    </source>
</reference>
<reference key="6">
    <citation type="journal article" date="2003" name="Science">
        <title>Collection, mapping, and annotation of over 28,000 cDNA clones from japonica rice.</title>
        <authorList>
            <consortium name="The rice full-length cDNA consortium"/>
        </authorList>
    </citation>
    <scope>NUCLEOTIDE SEQUENCE [LARGE SCALE MRNA]</scope>
    <source>
        <strain>cv. Nipponbare</strain>
    </source>
</reference>
<name>AMT22_ORYSJ</name>
<accession>Q8S230</accession>
<accession>A0A0P0VA16</accession>
<accession>Q0JI12</accession>
<protein>
    <recommendedName>
        <fullName>Ammonium transporter 2 member 2</fullName>
        <shortName>OsAMT2;2</shortName>
    </recommendedName>
</protein>